<gene>
    <name type="ordered locus">VV1_0488</name>
</gene>
<organism>
    <name type="scientific">Vibrio vulnificus (strain CMCP6)</name>
    <dbReference type="NCBI Taxonomy" id="216895"/>
    <lineage>
        <taxon>Bacteria</taxon>
        <taxon>Pseudomonadati</taxon>
        <taxon>Pseudomonadota</taxon>
        <taxon>Gammaproteobacteria</taxon>
        <taxon>Vibrionales</taxon>
        <taxon>Vibrionaceae</taxon>
        <taxon>Vibrio</taxon>
    </lineage>
</organism>
<proteinExistence type="inferred from homology"/>
<reference key="1">
    <citation type="submission" date="2002-12" db="EMBL/GenBank/DDBJ databases">
        <title>Complete genome sequence of Vibrio vulnificus CMCP6.</title>
        <authorList>
            <person name="Rhee J.H."/>
            <person name="Kim S.Y."/>
            <person name="Chung S.S."/>
            <person name="Kim J.J."/>
            <person name="Moon Y.H."/>
            <person name="Jeong H."/>
            <person name="Choy H.E."/>
        </authorList>
    </citation>
    <scope>NUCLEOTIDE SEQUENCE [LARGE SCALE GENOMIC DNA]</scope>
    <source>
        <strain>CMCP6</strain>
    </source>
</reference>
<sequence>MSKKIMATQKVIIASLNPAKITAVESAFTSAFPNGTFEFVGVNVPSEVADQPMSDSETHLGALNRVRNAKACRADGAFYVGLEAGIDGNVTFAWTVIESHTHRGESRSASLMLPPNVIAKLANANELGDVMDEVFGTENIKQKGGAISLLTQNQLTRSSVYHQALILALIPFTNPEHFPANLS</sequence>
<evidence type="ECO:0000255" key="1">
    <source>
        <dbReference type="HAMAP-Rule" id="MF_00648"/>
    </source>
</evidence>
<comment type="function">
    <text evidence="1">Phosphatase that hydrolyzes non-canonical purine nucleotides such as XTP and ITP to their respective diphosphate derivatives. Probably excludes non-canonical purines from DNA/RNA precursor pool, thus preventing their incorporation into DNA/RNA and avoiding chromosomal lesions.</text>
</comment>
<comment type="catalytic activity">
    <reaction evidence="1">
        <text>XTP + H2O = XDP + phosphate + H(+)</text>
        <dbReference type="Rhea" id="RHEA:28406"/>
        <dbReference type="ChEBI" id="CHEBI:15377"/>
        <dbReference type="ChEBI" id="CHEBI:15378"/>
        <dbReference type="ChEBI" id="CHEBI:43474"/>
        <dbReference type="ChEBI" id="CHEBI:59884"/>
        <dbReference type="ChEBI" id="CHEBI:61314"/>
        <dbReference type="EC" id="3.6.1.73"/>
    </reaction>
</comment>
<comment type="catalytic activity">
    <reaction evidence="1">
        <text>ITP + H2O = IDP + phosphate + H(+)</text>
        <dbReference type="Rhea" id="RHEA:28330"/>
        <dbReference type="ChEBI" id="CHEBI:15377"/>
        <dbReference type="ChEBI" id="CHEBI:15378"/>
        <dbReference type="ChEBI" id="CHEBI:43474"/>
        <dbReference type="ChEBI" id="CHEBI:58280"/>
        <dbReference type="ChEBI" id="CHEBI:61402"/>
        <dbReference type="EC" id="3.6.1.73"/>
    </reaction>
</comment>
<comment type="cofactor">
    <cofactor evidence="1">
        <name>Mg(2+)</name>
        <dbReference type="ChEBI" id="CHEBI:18420"/>
    </cofactor>
    <cofactor evidence="1">
        <name>Mn(2+)</name>
        <dbReference type="ChEBI" id="CHEBI:29035"/>
    </cofactor>
    <text evidence="1">Binds 1 divalent metal cation per subunit; can use either Mg(2+) or Mn(2+).</text>
</comment>
<comment type="subunit">
    <text evidence="1">Homodimer.</text>
</comment>
<comment type="similarity">
    <text evidence="1">Belongs to the YjjX NTPase family.</text>
</comment>
<name>NCPP_VIBVU</name>
<protein>
    <recommendedName>
        <fullName evidence="1">Inosine/xanthosine triphosphatase</fullName>
        <shortName evidence="1">ITPase/XTPase</shortName>
        <ecNumber evidence="1">3.6.1.73</ecNumber>
    </recommendedName>
    <alternativeName>
        <fullName evidence="1">Non-canonical purine NTP phosphatase</fullName>
    </alternativeName>
    <alternativeName>
        <fullName evidence="1">Non-standard purine NTP phosphatase</fullName>
    </alternativeName>
    <alternativeName>
        <fullName evidence="1">Nucleoside-triphosphate phosphatase</fullName>
        <shortName evidence="1">NTPase</shortName>
    </alternativeName>
</protein>
<dbReference type="EC" id="3.6.1.73" evidence="1"/>
<dbReference type="EMBL" id="AE016795">
    <property type="protein sequence ID" value="AAO09007.1"/>
    <property type="molecule type" value="Genomic_DNA"/>
</dbReference>
<dbReference type="SMR" id="Q8DEU6"/>
<dbReference type="KEGG" id="vvu:VV1_0488"/>
<dbReference type="HOGENOM" id="CLU_087417_1_0_6"/>
<dbReference type="Proteomes" id="UP000002275">
    <property type="component" value="Chromosome 1"/>
</dbReference>
<dbReference type="GO" id="GO:0103023">
    <property type="term" value="F:ITPase activity"/>
    <property type="evidence" value="ECO:0007669"/>
    <property type="project" value="UniProtKB-EC"/>
</dbReference>
<dbReference type="GO" id="GO:0046872">
    <property type="term" value="F:metal ion binding"/>
    <property type="evidence" value="ECO:0007669"/>
    <property type="project" value="UniProtKB-KW"/>
</dbReference>
<dbReference type="GO" id="GO:0000166">
    <property type="term" value="F:nucleotide binding"/>
    <property type="evidence" value="ECO:0007669"/>
    <property type="project" value="UniProtKB-KW"/>
</dbReference>
<dbReference type="GO" id="GO:0017111">
    <property type="term" value="F:ribonucleoside triphosphate phosphatase activity"/>
    <property type="evidence" value="ECO:0000250"/>
    <property type="project" value="UniProtKB"/>
</dbReference>
<dbReference type="GO" id="GO:0009117">
    <property type="term" value="P:nucleotide metabolic process"/>
    <property type="evidence" value="ECO:0007669"/>
    <property type="project" value="UniProtKB-KW"/>
</dbReference>
<dbReference type="GO" id="GO:0006772">
    <property type="term" value="P:thiamine metabolic process"/>
    <property type="evidence" value="ECO:0007669"/>
    <property type="project" value="TreeGrafter"/>
</dbReference>
<dbReference type="FunFam" id="3.90.950.10:FF:000002">
    <property type="entry name" value="Inosine/xanthosine triphosphatase"/>
    <property type="match status" value="1"/>
</dbReference>
<dbReference type="Gene3D" id="3.90.950.10">
    <property type="match status" value="1"/>
</dbReference>
<dbReference type="HAMAP" id="MF_00648">
    <property type="entry name" value="Non_canon_purine_NTPase_YjjX"/>
    <property type="match status" value="1"/>
</dbReference>
<dbReference type="InterPro" id="IPR029001">
    <property type="entry name" value="ITPase-like_fam"/>
</dbReference>
<dbReference type="InterPro" id="IPR002786">
    <property type="entry name" value="Non_canon_purine_NTPase"/>
</dbReference>
<dbReference type="InterPro" id="IPR026533">
    <property type="entry name" value="NTPase/PRRC1"/>
</dbReference>
<dbReference type="InterPro" id="IPR050299">
    <property type="entry name" value="YjjX_NTPase"/>
</dbReference>
<dbReference type="NCBIfam" id="TIGR00258">
    <property type="entry name" value="inosine/xanthosine triphosphatase"/>
    <property type="match status" value="1"/>
</dbReference>
<dbReference type="NCBIfam" id="NF003459">
    <property type="entry name" value="PRK05074.1"/>
    <property type="match status" value="1"/>
</dbReference>
<dbReference type="PANTHER" id="PTHR34699">
    <property type="match status" value="1"/>
</dbReference>
<dbReference type="PANTHER" id="PTHR34699:SF2">
    <property type="entry name" value="NON-CANONICAL PURINE NTP PHOSPHATASE_PRRC1 DOMAIN-CONTAINING PROTEIN"/>
    <property type="match status" value="1"/>
</dbReference>
<dbReference type="Pfam" id="PF01931">
    <property type="entry name" value="NTPase_I-T"/>
    <property type="match status" value="1"/>
</dbReference>
<dbReference type="SUPFAM" id="SSF52972">
    <property type="entry name" value="ITPase-like"/>
    <property type="match status" value="1"/>
</dbReference>
<keyword id="KW-0378">Hydrolase</keyword>
<keyword id="KW-0460">Magnesium</keyword>
<keyword id="KW-0464">Manganese</keyword>
<keyword id="KW-0479">Metal-binding</keyword>
<keyword id="KW-0546">Nucleotide metabolism</keyword>
<keyword id="KW-0547">Nucleotide-binding</keyword>
<feature type="chain" id="PRO_0000156353" description="Inosine/xanthosine triphosphatase">
    <location>
        <begin position="1"/>
        <end position="183"/>
    </location>
</feature>
<feature type="binding site" evidence="1">
    <location>
        <begin position="75"/>
        <end position="76"/>
    </location>
    <ligand>
        <name>substrate</name>
    </ligand>
</feature>
<feature type="binding site" evidence="1">
    <location>
        <position position="75"/>
    </location>
    <ligand>
        <name>Mg(2+)</name>
        <dbReference type="ChEBI" id="CHEBI:18420"/>
    </ligand>
</feature>
<accession>Q8DEU6</accession>